<dbReference type="EMBL" id="U31961">
    <property type="protein sequence ID" value="AAA84416.1"/>
    <property type="molecule type" value="Genomic_DNA"/>
</dbReference>
<dbReference type="EMBL" id="X95602">
    <property type="protein sequence ID" value="CAA64860.1"/>
    <property type="molecule type" value="Genomic_DNA"/>
</dbReference>
<dbReference type="EMBL" id="AE014297">
    <property type="protein sequence ID" value="AAF55350.1"/>
    <property type="molecule type" value="Genomic_DNA"/>
</dbReference>
<dbReference type="EMBL" id="AY089543">
    <property type="protein sequence ID" value="AAL90281.1"/>
    <property type="molecule type" value="mRNA"/>
</dbReference>
<dbReference type="RefSeq" id="NP_001189236.1">
    <property type="nucleotide sequence ID" value="NM_001202307.2"/>
</dbReference>
<dbReference type="RefSeq" id="NP_001189237.1">
    <property type="nucleotide sequence ID" value="NM_001202308.2"/>
</dbReference>
<dbReference type="RefSeq" id="NP_650572.2">
    <property type="nucleotide sequence ID" value="NM_142315.4"/>
</dbReference>
<dbReference type="RefSeq" id="NP_732167.1">
    <property type="nucleotide sequence ID" value="NM_169727.2"/>
</dbReference>
<dbReference type="SMR" id="P48605"/>
<dbReference type="BioGRID" id="67074">
    <property type="interactions" value="97"/>
</dbReference>
<dbReference type="ComplexPortal" id="CPX-2772">
    <property type="entry name" value="Chaperonin-containing T-complex"/>
</dbReference>
<dbReference type="DIP" id="DIP-20434N"/>
<dbReference type="FunCoup" id="P48605">
    <property type="interactions" value="2123"/>
</dbReference>
<dbReference type="IntAct" id="P48605">
    <property type="interactions" value="102"/>
</dbReference>
<dbReference type="MINT" id="P48605"/>
<dbReference type="STRING" id="7227.FBpp0082788"/>
<dbReference type="PaxDb" id="7227-FBpp0082787"/>
<dbReference type="DNASU" id="42029"/>
<dbReference type="EnsemblMetazoa" id="FBtr0083337">
    <property type="protein sequence ID" value="FBpp0082787"/>
    <property type="gene ID" value="FBgn0015019"/>
</dbReference>
<dbReference type="EnsemblMetazoa" id="FBtr0083338">
    <property type="protein sequence ID" value="FBpp0082788"/>
    <property type="gene ID" value="FBgn0015019"/>
</dbReference>
<dbReference type="EnsemblMetazoa" id="FBtr0302370">
    <property type="protein sequence ID" value="FBpp0291565"/>
    <property type="gene ID" value="FBgn0015019"/>
</dbReference>
<dbReference type="EnsemblMetazoa" id="FBtr0302371">
    <property type="protein sequence ID" value="FBpp0291566"/>
    <property type="gene ID" value="FBgn0015019"/>
</dbReference>
<dbReference type="GeneID" id="42029"/>
<dbReference type="KEGG" id="dme:Dmel_CG8977"/>
<dbReference type="AGR" id="FB:FBgn0015019"/>
<dbReference type="CTD" id="7203"/>
<dbReference type="FlyBase" id="FBgn0015019">
    <property type="gene designation" value="CCT3"/>
</dbReference>
<dbReference type="VEuPathDB" id="VectorBase:FBgn0015019"/>
<dbReference type="eggNOG" id="KOG0364">
    <property type="taxonomic scope" value="Eukaryota"/>
</dbReference>
<dbReference type="GeneTree" id="ENSGT00570000079224"/>
<dbReference type="HOGENOM" id="CLU_008891_7_3_1"/>
<dbReference type="InParanoid" id="P48605"/>
<dbReference type="OMA" id="CGGSTIR"/>
<dbReference type="OrthoDB" id="275057at2759"/>
<dbReference type="PhylomeDB" id="P48605"/>
<dbReference type="BRENDA" id="3.6.4.B10">
    <property type="organism ID" value="1994"/>
</dbReference>
<dbReference type="Reactome" id="R-DME-390471">
    <property type="pathway name" value="Association of TriC/CCT with target proteins during biosynthesis"/>
</dbReference>
<dbReference type="Reactome" id="R-DME-6814122">
    <property type="pathway name" value="Cooperation of PDCL (PhLP1) and TRiC/CCT in G-protein beta folding"/>
</dbReference>
<dbReference type="SignaLink" id="P48605"/>
<dbReference type="BioGRID-ORCS" id="42029">
    <property type="hits" value="1 hit in 1 CRISPR screen"/>
</dbReference>
<dbReference type="GenomeRNAi" id="42029"/>
<dbReference type="PRO" id="PR:P48605"/>
<dbReference type="Proteomes" id="UP000000803">
    <property type="component" value="Chromosome 3R"/>
</dbReference>
<dbReference type="Bgee" id="FBgn0015019">
    <property type="expression patterns" value="Expressed in egg cell and 224 other cell types or tissues"/>
</dbReference>
<dbReference type="ExpressionAtlas" id="P48605">
    <property type="expression patterns" value="baseline and differential"/>
</dbReference>
<dbReference type="GO" id="GO:0005832">
    <property type="term" value="C:chaperonin-containing T-complex"/>
    <property type="evidence" value="ECO:0000250"/>
    <property type="project" value="FlyBase"/>
</dbReference>
<dbReference type="GO" id="GO:0005524">
    <property type="term" value="F:ATP binding"/>
    <property type="evidence" value="ECO:0007669"/>
    <property type="project" value="UniProtKB-KW"/>
</dbReference>
<dbReference type="GO" id="GO:0016887">
    <property type="term" value="F:ATP hydrolysis activity"/>
    <property type="evidence" value="ECO:0007669"/>
    <property type="project" value="InterPro"/>
</dbReference>
<dbReference type="GO" id="GO:0140662">
    <property type="term" value="F:ATP-dependent protein folding chaperone"/>
    <property type="evidence" value="ECO:0007669"/>
    <property type="project" value="InterPro"/>
</dbReference>
<dbReference type="GO" id="GO:0051082">
    <property type="term" value="F:unfolded protein binding"/>
    <property type="evidence" value="ECO:0000318"/>
    <property type="project" value="GO_Central"/>
</dbReference>
<dbReference type="GO" id="GO:0035149">
    <property type="term" value="P:lumen formation, open tracheal system"/>
    <property type="evidence" value="ECO:0007001"/>
    <property type="project" value="FlyBase"/>
</dbReference>
<dbReference type="GO" id="GO:0006457">
    <property type="term" value="P:protein folding"/>
    <property type="evidence" value="ECO:0000250"/>
    <property type="project" value="FlyBase"/>
</dbReference>
<dbReference type="GO" id="GO:0007430">
    <property type="term" value="P:terminal branching, open tracheal system"/>
    <property type="evidence" value="ECO:0007001"/>
    <property type="project" value="FlyBase"/>
</dbReference>
<dbReference type="CDD" id="cd03337">
    <property type="entry name" value="TCP1_gamma"/>
    <property type="match status" value="1"/>
</dbReference>
<dbReference type="FunFam" id="1.10.560.10:FF:000073">
    <property type="entry name" value="T-complex protein 1 subunit gamma"/>
    <property type="match status" value="1"/>
</dbReference>
<dbReference type="FunFam" id="1.10.560.10:FF:000085">
    <property type="entry name" value="T-complex protein 1 subunit gamma"/>
    <property type="match status" value="1"/>
</dbReference>
<dbReference type="FunFam" id="3.50.7.10:FF:000005">
    <property type="entry name" value="T-complex protein 1 subunit gamma"/>
    <property type="match status" value="1"/>
</dbReference>
<dbReference type="Gene3D" id="3.50.7.10">
    <property type="entry name" value="GroEL"/>
    <property type="match status" value="1"/>
</dbReference>
<dbReference type="Gene3D" id="1.10.560.10">
    <property type="entry name" value="GroEL-like equatorial domain"/>
    <property type="match status" value="1"/>
</dbReference>
<dbReference type="Gene3D" id="3.30.260.10">
    <property type="entry name" value="TCP-1-like chaperonin intermediate domain"/>
    <property type="match status" value="1"/>
</dbReference>
<dbReference type="InterPro" id="IPR012719">
    <property type="entry name" value="Chap_CCT_gamma"/>
</dbReference>
<dbReference type="InterPro" id="IPR017998">
    <property type="entry name" value="Chaperone_TCP-1"/>
</dbReference>
<dbReference type="InterPro" id="IPR002194">
    <property type="entry name" value="Chaperonin_TCP-1_CS"/>
</dbReference>
<dbReference type="InterPro" id="IPR002423">
    <property type="entry name" value="Cpn60/GroEL/TCP-1"/>
</dbReference>
<dbReference type="InterPro" id="IPR027409">
    <property type="entry name" value="GroEL-like_apical_dom_sf"/>
</dbReference>
<dbReference type="InterPro" id="IPR027413">
    <property type="entry name" value="GROEL-like_equatorial_sf"/>
</dbReference>
<dbReference type="InterPro" id="IPR027410">
    <property type="entry name" value="TCP-1-like_intermed_sf"/>
</dbReference>
<dbReference type="InterPro" id="IPR053374">
    <property type="entry name" value="TCP-1_chaperonin"/>
</dbReference>
<dbReference type="InterPro" id="IPR054827">
    <property type="entry name" value="thermosome_alpha"/>
</dbReference>
<dbReference type="NCBIfam" id="TIGR02344">
    <property type="entry name" value="chap_CCT_gamma"/>
    <property type="match status" value="1"/>
</dbReference>
<dbReference type="NCBIfam" id="NF041082">
    <property type="entry name" value="thermosome_alpha"/>
    <property type="match status" value="1"/>
</dbReference>
<dbReference type="NCBIfam" id="NF041083">
    <property type="entry name" value="thermosome_beta"/>
    <property type="match status" value="1"/>
</dbReference>
<dbReference type="PANTHER" id="PTHR11353">
    <property type="entry name" value="CHAPERONIN"/>
    <property type="match status" value="1"/>
</dbReference>
<dbReference type="Pfam" id="PF00118">
    <property type="entry name" value="Cpn60_TCP1"/>
    <property type="match status" value="1"/>
</dbReference>
<dbReference type="PRINTS" id="PR00304">
    <property type="entry name" value="TCOMPLEXTCP1"/>
</dbReference>
<dbReference type="SUPFAM" id="SSF52029">
    <property type="entry name" value="GroEL apical domain-like"/>
    <property type="match status" value="1"/>
</dbReference>
<dbReference type="SUPFAM" id="SSF48592">
    <property type="entry name" value="GroEL equatorial domain-like"/>
    <property type="match status" value="1"/>
</dbReference>
<dbReference type="SUPFAM" id="SSF54849">
    <property type="entry name" value="GroEL-intermediate domain like"/>
    <property type="match status" value="1"/>
</dbReference>
<dbReference type="PROSITE" id="PS00750">
    <property type="entry name" value="TCP1_1"/>
    <property type="match status" value="1"/>
</dbReference>
<dbReference type="PROSITE" id="PS00751">
    <property type="entry name" value="TCP1_2"/>
    <property type="match status" value="1"/>
</dbReference>
<dbReference type="PROSITE" id="PS00995">
    <property type="entry name" value="TCP1_3"/>
    <property type="match status" value="1"/>
</dbReference>
<gene>
    <name evidence="5" type="primary">CCT3</name>
    <name evidence="3" type="synonym">Cctg</name>
    <name evidence="5" type="ORF">CG8977</name>
</gene>
<name>TCPG_DROME</name>
<comment type="function">
    <text>Molecular chaperone; assists the folding of proteins upon ATP hydrolysis. Known to play a role, in vitro, in the folding of actin and tubulin.</text>
</comment>
<comment type="subunit">
    <text>Heterooligomeric complex of about 850 to 900 kDa that forms two stacked rings, 12 to 16 nm in diameter.</text>
</comment>
<comment type="subcellular location">
    <subcellularLocation>
        <location>Cytoplasm</location>
    </subcellularLocation>
</comment>
<comment type="similarity">
    <text evidence="4">Belongs to the TCP-1 chaperonin family.</text>
</comment>
<keyword id="KW-0067">ATP-binding</keyword>
<keyword id="KW-0143">Chaperone</keyword>
<keyword id="KW-0963">Cytoplasm</keyword>
<keyword id="KW-1015">Disulfide bond</keyword>
<keyword id="KW-0547">Nucleotide-binding</keyword>
<keyword id="KW-1185">Reference proteome</keyword>
<accession>P48605</accession>
<accession>Q9VER9</accession>
<proteinExistence type="evidence at transcript level"/>
<protein>
    <recommendedName>
        <fullName>T-complex protein 1 subunit gamma</fullName>
        <shortName>TCP-1-gamma</shortName>
    </recommendedName>
    <alternativeName>
        <fullName evidence="3">CCT-gamma</fullName>
    </alternativeName>
    <alternativeName>
        <fullName evidence="5">Chaperonin containing TCP1 subunit 3</fullName>
    </alternativeName>
</protein>
<sequence>MFGGQQPILVLSQNTKRESGRKVQLENIQAGKAIADVIRTCLGPQAMLKMLMDPMGGIVMTNDGNAILREITVQHPAAKSMIEIARTQDEEVGDGTTSVIVLAGEMLAAAEPFLQQQIHPTVIIRAYREALEDIVGHLQSQLSIQLDVKDKAKMADVVKACVGTKFIGKWSDLAVKIALDAVETVTLSENGRLEVDIKRYAKVEKIPGGAIEESCVLKGVMINKDVTHPKMRRLIENPRIVLLDCSLEYKKGESQTNVEIIGEQDFTRMLQIEEEFVQRICADIIAVKPDLVFTEKGVSDLAQHYLLKAGITAIRRLRKTDNLRIARACGATIVNRTEELTEKDVGTGAGLFEVKKIGDEYFTFVTECKEPKACTILLRGASKDILNETERNLQDALHVARNLVLEPRLVAGGGAVEMAASQLLTRKQVKGPYTAVAHALEIIPRTLAQNCGANTIRALTALRAKHASHTGDGVCAWGIDGESGEIVDMNVKNIWEPLAVKLQTYKTAVETAILLLRIDDIVSGSKKRGGNEPTNPAAMAQGQE</sequence>
<organism>
    <name type="scientific">Drosophila melanogaster</name>
    <name type="common">Fruit fly</name>
    <dbReference type="NCBI Taxonomy" id="7227"/>
    <lineage>
        <taxon>Eukaryota</taxon>
        <taxon>Metazoa</taxon>
        <taxon>Ecdysozoa</taxon>
        <taxon>Arthropoda</taxon>
        <taxon>Hexapoda</taxon>
        <taxon>Insecta</taxon>
        <taxon>Pterygota</taxon>
        <taxon>Neoptera</taxon>
        <taxon>Endopterygota</taxon>
        <taxon>Diptera</taxon>
        <taxon>Brachycera</taxon>
        <taxon>Muscomorpha</taxon>
        <taxon>Ephydroidea</taxon>
        <taxon>Drosophilidae</taxon>
        <taxon>Drosophila</taxon>
        <taxon>Sophophora</taxon>
    </lineage>
</organism>
<feature type="chain" id="PRO_0000128327" description="T-complex protein 1 subunit gamma">
    <location>
        <begin position="1"/>
        <end position="544"/>
    </location>
</feature>
<feature type="region of interest" description="Disordered" evidence="2">
    <location>
        <begin position="525"/>
        <end position="544"/>
    </location>
</feature>
<feature type="disulfide bond" evidence="1">
    <location>
        <begin position="368"/>
        <end position="374"/>
    </location>
</feature>
<feature type="sequence conflict" description="In Ref. 2; CAA64860." evidence="4" ref="2">
    <original>S</original>
    <variation>SD</variation>
    <location>
        <position position="12"/>
    </location>
</feature>
<feature type="sequence conflict" description="In Ref. 1; AAA84416." evidence="4" ref="1">
    <location>
        <begin position="35"/>
        <end position="47"/>
    </location>
</feature>
<evidence type="ECO:0000250" key="1"/>
<evidence type="ECO:0000256" key="2">
    <source>
        <dbReference type="SAM" id="MobiDB-lite"/>
    </source>
</evidence>
<evidence type="ECO:0000303" key="3">
    <source>
    </source>
</evidence>
<evidence type="ECO:0000305" key="4"/>
<evidence type="ECO:0000312" key="5">
    <source>
        <dbReference type="FlyBase" id="FBgn0015019"/>
    </source>
</evidence>
<reference key="1">
    <citation type="journal article" date="1995" name="Proc. Natl. Acad. Sci. U.S.A.">
        <title>Complete sequence of the bithorax complex of Drosophila.</title>
        <authorList>
            <person name="Martin C.H."/>
            <person name="Mayeda C.A."/>
            <person name="Davis C.A."/>
            <person name="Ericsson C.L."/>
            <person name="Knafels J.D."/>
            <person name="Mathog D.R."/>
            <person name="Celniker S.E."/>
            <person name="Lewis E.B."/>
            <person name="Palazzolo M.J."/>
        </authorList>
    </citation>
    <scope>NUCLEOTIDE SEQUENCE [GENOMIC DNA]</scope>
    <source>
        <strain>Canton-S</strain>
    </source>
</reference>
<reference key="2">
    <citation type="journal article" date="1996" name="Gene">
        <title>Drosophila melanogaster P1 genomic clone DS05563 contains the chaperonin-encoding gene Cctg.</title>
        <authorList>
            <person name="Walkley N.A."/>
            <person name="Malik A.N."/>
        </authorList>
    </citation>
    <scope>NUCLEOTIDE SEQUENCE [GENOMIC DNA]</scope>
</reference>
<reference key="3">
    <citation type="journal article" date="2000" name="Science">
        <title>The genome sequence of Drosophila melanogaster.</title>
        <authorList>
            <person name="Adams M.D."/>
            <person name="Celniker S.E."/>
            <person name="Holt R.A."/>
            <person name="Evans C.A."/>
            <person name="Gocayne J.D."/>
            <person name="Amanatides P.G."/>
            <person name="Scherer S.E."/>
            <person name="Li P.W."/>
            <person name="Hoskins R.A."/>
            <person name="Galle R.F."/>
            <person name="George R.A."/>
            <person name="Lewis S.E."/>
            <person name="Richards S."/>
            <person name="Ashburner M."/>
            <person name="Henderson S.N."/>
            <person name="Sutton G.G."/>
            <person name="Wortman J.R."/>
            <person name="Yandell M.D."/>
            <person name="Zhang Q."/>
            <person name="Chen L.X."/>
            <person name="Brandon R.C."/>
            <person name="Rogers Y.-H.C."/>
            <person name="Blazej R.G."/>
            <person name="Champe M."/>
            <person name="Pfeiffer B.D."/>
            <person name="Wan K.H."/>
            <person name="Doyle C."/>
            <person name="Baxter E.G."/>
            <person name="Helt G."/>
            <person name="Nelson C.R."/>
            <person name="Miklos G.L.G."/>
            <person name="Abril J.F."/>
            <person name="Agbayani A."/>
            <person name="An H.-J."/>
            <person name="Andrews-Pfannkoch C."/>
            <person name="Baldwin D."/>
            <person name="Ballew R.M."/>
            <person name="Basu A."/>
            <person name="Baxendale J."/>
            <person name="Bayraktaroglu L."/>
            <person name="Beasley E.M."/>
            <person name="Beeson K.Y."/>
            <person name="Benos P.V."/>
            <person name="Berman B.P."/>
            <person name="Bhandari D."/>
            <person name="Bolshakov S."/>
            <person name="Borkova D."/>
            <person name="Botchan M.R."/>
            <person name="Bouck J."/>
            <person name="Brokstein P."/>
            <person name="Brottier P."/>
            <person name="Burtis K.C."/>
            <person name="Busam D.A."/>
            <person name="Butler H."/>
            <person name="Cadieu E."/>
            <person name="Center A."/>
            <person name="Chandra I."/>
            <person name="Cherry J.M."/>
            <person name="Cawley S."/>
            <person name="Dahlke C."/>
            <person name="Davenport L.B."/>
            <person name="Davies P."/>
            <person name="de Pablos B."/>
            <person name="Delcher A."/>
            <person name="Deng Z."/>
            <person name="Mays A.D."/>
            <person name="Dew I."/>
            <person name="Dietz S.M."/>
            <person name="Dodson K."/>
            <person name="Doup L.E."/>
            <person name="Downes M."/>
            <person name="Dugan-Rocha S."/>
            <person name="Dunkov B.C."/>
            <person name="Dunn P."/>
            <person name="Durbin K.J."/>
            <person name="Evangelista C.C."/>
            <person name="Ferraz C."/>
            <person name="Ferriera S."/>
            <person name="Fleischmann W."/>
            <person name="Fosler C."/>
            <person name="Gabrielian A.E."/>
            <person name="Garg N.S."/>
            <person name="Gelbart W.M."/>
            <person name="Glasser K."/>
            <person name="Glodek A."/>
            <person name="Gong F."/>
            <person name="Gorrell J.H."/>
            <person name="Gu Z."/>
            <person name="Guan P."/>
            <person name="Harris M."/>
            <person name="Harris N.L."/>
            <person name="Harvey D.A."/>
            <person name="Heiman T.J."/>
            <person name="Hernandez J.R."/>
            <person name="Houck J."/>
            <person name="Hostin D."/>
            <person name="Houston K.A."/>
            <person name="Howland T.J."/>
            <person name="Wei M.-H."/>
            <person name="Ibegwam C."/>
            <person name="Jalali M."/>
            <person name="Kalush F."/>
            <person name="Karpen G.H."/>
            <person name="Ke Z."/>
            <person name="Kennison J.A."/>
            <person name="Ketchum K.A."/>
            <person name="Kimmel B.E."/>
            <person name="Kodira C.D."/>
            <person name="Kraft C.L."/>
            <person name="Kravitz S."/>
            <person name="Kulp D."/>
            <person name="Lai Z."/>
            <person name="Lasko P."/>
            <person name="Lei Y."/>
            <person name="Levitsky A.A."/>
            <person name="Li J.H."/>
            <person name="Li Z."/>
            <person name="Liang Y."/>
            <person name="Lin X."/>
            <person name="Liu X."/>
            <person name="Mattei B."/>
            <person name="McIntosh T.C."/>
            <person name="McLeod M.P."/>
            <person name="McPherson D."/>
            <person name="Merkulov G."/>
            <person name="Milshina N.V."/>
            <person name="Mobarry C."/>
            <person name="Morris J."/>
            <person name="Moshrefi A."/>
            <person name="Mount S.M."/>
            <person name="Moy M."/>
            <person name="Murphy B."/>
            <person name="Murphy L."/>
            <person name="Muzny D.M."/>
            <person name="Nelson D.L."/>
            <person name="Nelson D.R."/>
            <person name="Nelson K.A."/>
            <person name="Nixon K."/>
            <person name="Nusskern D.R."/>
            <person name="Pacleb J.M."/>
            <person name="Palazzolo M."/>
            <person name="Pittman G.S."/>
            <person name="Pan S."/>
            <person name="Pollard J."/>
            <person name="Puri V."/>
            <person name="Reese M.G."/>
            <person name="Reinert K."/>
            <person name="Remington K."/>
            <person name="Saunders R.D.C."/>
            <person name="Scheeler F."/>
            <person name="Shen H."/>
            <person name="Shue B.C."/>
            <person name="Siden-Kiamos I."/>
            <person name="Simpson M."/>
            <person name="Skupski M.P."/>
            <person name="Smith T.J."/>
            <person name="Spier E."/>
            <person name="Spradling A.C."/>
            <person name="Stapleton M."/>
            <person name="Strong R."/>
            <person name="Sun E."/>
            <person name="Svirskas R."/>
            <person name="Tector C."/>
            <person name="Turner R."/>
            <person name="Venter E."/>
            <person name="Wang A.H."/>
            <person name="Wang X."/>
            <person name="Wang Z.-Y."/>
            <person name="Wassarman D.A."/>
            <person name="Weinstock G.M."/>
            <person name="Weissenbach J."/>
            <person name="Williams S.M."/>
            <person name="Woodage T."/>
            <person name="Worley K.C."/>
            <person name="Wu D."/>
            <person name="Yang S."/>
            <person name="Yao Q.A."/>
            <person name="Ye J."/>
            <person name="Yeh R.-F."/>
            <person name="Zaveri J.S."/>
            <person name="Zhan M."/>
            <person name="Zhang G."/>
            <person name="Zhao Q."/>
            <person name="Zheng L."/>
            <person name="Zheng X.H."/>
            <person name="Zhong F.N."/>
            <person name="Zhong W."/>
            <person name="Zhou X."/>
            <person name="Zhu S.C."/>
            <person name="Zhu X."/>
            <person name="Smith H.O."/>
            <person name="Gibbs R.A."/>
            <person name="Myers E.W."/>
            <person name="Rubin G.M."/>
            <person name="Venter J.C."/>
        </authorList>
    </citation>
    <scope>NUCLEOTIDE SEQUENCE [LARGE SCALE GENOMIC DNA]</scope>
    <source>
        <strain>Berkeley</strain>
    </source>
</reference>
<reference key="4">
    <citation type="journal article" date="2002" name="Genome Biol.">
        <title>Annotation of the Drosophila melanogaster euchromatic genome: a systematic review.</title>
        <authorList>
            <person name="Misra S."/>
            <person name="Crosby M.A."/>
            <person name="Mungall C.J."/>
            <person name="Matthews B.B."/>
            <person name="Campbell K.S."/>
            <person name="Hradecky P."/>
            <person name="Huang Y."/>
            <person name="Kaminker J.S."/>
            <person name="Millburn G.H."/>
            <person name="Prochnik S.E."/>
            <person name="Smith C.D."/>
            <person name="Tupy J.L."/>
            <person name="Whitfield E.J."/>
            <person name="Bayraktaroglu L."/>
            <person name="Berman B.P."/>
            <person name="Bettencourt B.R."/>
            <person name="Celniker S.E."/>
            <person name="de Grey A.D.N.J."/>
            <person name="Drysdale R.A."/>
            <person name="Harris N.L."/>
            <person name="Richter J."/>
            <person name="Russo S."/>
            <person name="Schroeder A.J."/>
            <person name="Shu S.Q."/>
            <person name="Stapleton M."/>
            <person name="Yamada C."/>
            <person name="Ashburner M."/>
            <person name="Gelbart W.M."/>
            <person name="Rubin G.M."/>
            <person name="Lewis S.E."/>
        </authorList>
    </citation>
    <scope>GENOME REANNOTATION</scope>
    <source>
        <strain>Berkeley</strain>
    </source>
</reference>
<reference key="5">
    <citation type="journal article" date="2002" name="Genome Biol.">
        <title>A Drosophila full-length cDNA resource.</title>
        <authorList>
            <person name="Stapleton M."/>
            <person name="Carlson J.W."/>
            <person name="Brokstein P."/>
            <person name="Yu C."/>
            <person name="Champe M."/>
            <person name="George R.A."/>
            <person name="Guarin H."/>
            <person name="Kronmiller B."/>
            <person name="Pacleb J.M."/>
            <person name="Park S."/>
            <person name="Wan K.H."/>
            <person name="Rubin G.M."/>
            <person name="Celniker S.E."/>
        </authorList>
    </citation>
    <scope>NUCLEOTIDE SEQUENCE [LARGE SCALE MRNA]</scope>
    <source>
        <strain>Berkeley</strain>
        <tissue>Embryo</tissue>
    </source>
</reference>